<dbReference type="EMBL" id="AM889285">
    <property type="protein sequence ID" value="CAP57125.1"/>
    <property type="molecule type" value="Genomic_DNA"/>
</dbReference>
<dbReference type="EMBL" id="CP001189">
    <property type="protein sequence ID" value="ACI52909.1"/>
    <property type="molecule type" value="Genomic_DNA"/>
</dbReference>
<dbReference type="RefSeq" id="WP_012227584.1">
    <property type="nucleotide sequence ID" value="NC_010125.1"/>
</dbReference>
<dbReference type="SMR" id="A9H0G8"/>
<dbReference type="STRING" id="272568.GDI3182"/>
<dbReference type="KEGG" id="gdi:GDI3182"/>
<dbReference type="KEGG" id="gdj:Gdia_3179"/>
<dbReference type="eggNOG" id="COG2001">
    <property type="taxonomic scope" value="Bacteria"/>
</dbReference>
<dbReference type="HOGENOM" id="CLU_107907_1_0_5"/>
<dbReference type="OrthoDB" id="9807753at2"/>
<dbReference type="Proteomes" id="UP000001176">
    <property type="component" value="Chromosome"/>
</dbReference>
<dbReference type="GO" id="GO:0005737">
    <property type="term" value="C:cytoplasm"/>
    <property type="evidence" value="ECO:0007669"/>
    <property type="project" value="UniProtKB-UniRule"/>
</dbReference>
<dbReference type="GO" id="GO:0009295">
    <property type="term" value="C:nucleoid"/>
    <property type="evidence" value="ECO:0007669"/>
    <property type="project" value="UniProtKB-SubCell"/>
</dbReference>
<dbReference type="GO" id="GO:0003700">
    <property type="term" value="F:DNA-binding transcription factor activity"/>
    <property type="evidence" value="ECO:0007669"/>
    <property type="project" value="UniProtKB-UniRule"/>
</dbReference>
<dbReference type="GO" id="GO:0000976">
    <property type="term" value="F:transcription cis-regulatory region binding"/>
    <property type="evidence" value="ECO:0007669"/>
    <property type="project" value="TreeGrafter"/>
</dbReference>
<dbReference type="GO" id="GO:2000143">
    <property type="term" value="P:negative regulation of DNA-templated transcription initiation"/>
    <property type="evidence" value="ECO:0007669"/>
    <property type="project" value="TreeGrafter"/>
</dbReference>
<dbReference type="CDD" id="cd16321">
    <property type="entry name" value="MraZ_C"/>
    <property type="match status" value="1"/>
</dbReference>
<dbReference type="CDD" id="cd16320">
    <property type="entry name" value="MraZ_N"/>
    <property type="match status" value="1"/>
</dbReference>
<dbReference type="Gene3D" id="3.40.1550.20">
    <property type="entry name" value="Transcriptional regulator MraZ domain"/>
    <property type="match status" value="1"/>
</dbReference>
<dbReference type="HAMAP" id="MF_01008">
    <property type="entry name" value="MraZ"/>
    <property type="match status" value="1"/>
</dbReference>
<dbReference type="InterPro" id="IPR003444">
    <property type="entry name" value="MraZ"/>
</dbReference>
<dbReference type="InterPro" id="IPR035644">
    <property type="entry name" value="MraZ_C"/>
</dbReference>
<dbReference type="InterPro" id="IPR020603">
    <property type="entry name" value="MraZ_dom"/>
</dbReference>
<dbReference type="InterPro" id="IPR035642">
    <property type="entry name" value="MraZ_N"/>
</dbReference>
<dbReference type="InterPro" id="IPR038619">
    <property type="entry name" value="MraZ_sf"/>
</dbReference>
<dbReference type="InterPro" id="IPR007159">
    <property type="entry name" value="SpoVT-AbrB_dom"/>
</dbReference>
<dbReference type="InterPro" id="IPR037914">
    <property type="entry name" value="SpoVT-AbrB_sf"/>
</dbReference>
<dbReference type="NCBIfam" id="NF001477">
    <property type="entry name" value="PRK00326.2-4"/>
    <property type="match status" value="1"/>
</dbReference>
<dbReference type="PANTHER" id="PTHR34701">
    <property type="entry name" value="TRANSCRIPTIONAL REGULATOR MRAZ"/>
    <property type="match status" value="1"/>
</dbReference>
<dbReference type="PANTHER" id="PTHR34701:SF1">
    <property type="entry name" value="TRANSCRIPTIONAL REGULATOR MRAZ"/>
    <property type="match status" value="1"/>
</dbReference>
<dbReference type="Pfam" id="PF02381">
    <property type="entry name" value="MraZ"/>
    <property type="match status" value="2"/>
</dbReference>
<dbReference type="SUPFAM" id="SSF89447">
    <property type="entry name" value="AbrB/MazE/MraZ-like"/>
    <property type="match status" value="1"/>
</dbReference>
<dbReference type="PROSITE" id="PS51740">
    <property type="entry name" value="SPOVT_ABRB"/>
    <property type="match status" value="2"/>
</dbReference>
<evidence type="ECO:0000255" key="1">
    <source>
        <dbReference type="HAMAP-Rule" id="MF_01008"/>
    </source>
</evidence>
<evidence type="ECO:0000255" key="2">
    <source>
        <dbReference type="PROSITE-ProRule" id="PRU01076"/>
    </source>
</evidence>
<evidence type="ECO:0000256" key="3">
    <source>
        <dbReference type="SAM" id="MobiDB-lite"/>
    </source>
</evidence>
<name>MRAZ_GLUDA</name>
<accession>A9H0G8</accession>
<accession>B5ZKD5</accession>
<feature type="chain" id="PRO_1000084006" description="Transcriptional regulator MraZ">
    <location>
        <begin position="1"/>
        <end position="158"/>
    </location>
</feature>
<feature type="domain" description="SpoVT-AbrB 1" evidence="2">
    <location>
        <begin position="7"/>
        <end position="57"/>
    </location>
</feature>
<feature type="domain" description="SpoVT-AbrB 2" evidence="2">
    <location>
        <begin position="86"/>
        <end position="129"/>
    </location>
</feature>
<feature type="region of interest" description="Disordered" evidence="3">
    <location>
        <begin position="133"/>
        <end position="158"/>
    </location>
</feature>
<proteinExistence type="inferred from homology"/>
<organism>
    <name type="scientific">Gluconacetobacter diazotrophicus (strain ATCC 49037 / DSM 5601 / CCUG 37298 / CIP 103539 / LMG 7603 / PAl5)</name>
    <dbReference type="NCBI Taxonomy" id="272568"/>
    <lineage>
        <taxon>Bacteria</taxon>
        <taxon>Pseudomonadati</taxon>
        <taxon>Pseudomonadota</taxon>
        <taxon>Alphaproteobacteria</taxon>
        <taxon>Acetobacterales</taxon>
        <taxon>Acetobacteraceae</taxon>
        <taxon>Gluconacetobacter</taxon>
    </lineage>
</organism>
<reference key="1">
    <citation type="journal article" date="2009" name="BMC Genomics">
        <title>Complete genome sequence of the sugarcane nitrogen-fixing endophyte Gluconacetobacter diazotrophicus Pal5.</title>
        <authorList>
            <person name="Bertalan M."/>
            <person name="Albano R."/>
            <person name="de Padua V."/>
            <person name="Rouws L."/>
            <person name="Rojas C."/>
            <person name="Hemerly A."/>
            <person name="Teixeira K."/>
            <person name="Schwab S."/>
            <person name="Araujo J."/>
            <person name="Oliveira A."/>
            <person name="Franca L."/>
            <person name="Magalhaes V."/>
            <person name="Alqueres S."/>
            <person name="Cardoso A."/>
            <person name="Almeida W."/>
            <person name="Loureiro M.M."/>
            <person name="Nogueira E."/>
            <person name="Cidade D."/>
            <person name="Oliveira D."/>
            <person name="Simao T."/>
            <person name="Macedo J."/>
            <person name="Valadao A."/>
            <person name="Dreschsel M."/>
            <person name="Freitas F."/>
            <person name="Vidal M."/>
            <person name="Guedes H."/>
            <person name="Rodrigues E."/>
            <person name="Meneses C."/>
            <person name="Brioso P."/>
            <person name="Pozzer L."/>
            <person name="Figueiredo D."/>
            <person name="Montano H."/>
            <person name="Junior J."/>
            <person name="de Souza Filho G."/>
            <person name="Martin Quintana Flores V."/>
            <person name="Ferreira B."/>
            <person name="Branco A."/>
            <person name="Gonzalez P."/>
            <person name="Guillobel H."/>
            <person name="Lemos M."/>
            <person name="Seibel L."/>
            <person name="Macedo J."/>
            <person name="Alves-Ferreira M."/>
            <person name="Sachetto-Martins G."/>
            <person name="Coelho A."/>
            <person name="Santos E."/>
            <person name="Amaral G."/>
            <person name="Neves A."/>
            <person name="Pacheco A.B."/>
            <person name="Carvalho D."/>
            <person name="Lery L."/>
            <person name="Bisch P."/>
            <person name="Rossle S.C."/>
            <person name="Urmenyi T."/>
            <person name="Rael Pereira A."/>
            <person name="Silva R."/>
            <person name="Rondinelli E."/>
            <person name="von Kruger W."/>
            <person name="Martins O."/>
            <person name="Baldani J.I."/>
            <person name="Ferreira P.C."/>
        </authorList>
    </citation>
    <scope>NUCLEOTIDE SEQUENCE [LARGE SCALE GENOMIC DNA]</scope>
    <source>
        <strain>ATCC 49037 / DSM 5601 / CCUG 37298 / CIP 103539 / LMG 7603 / PAl5</strain>
    </source>
</reference>
<reference key="2">
    <citation type="journal article" date="2010" name="Stand. Genomic Sci.">
        <title>Two genome sequences of the same bacterial strain, Gluconacetobacter diazotrophicus PAl 5, suggest a new standard in genome sequence submission.</title>
        <authorList>
            <person name="Giongo A."/>
            <person name="Tyler H.L."/>
            <person name="Zipperer U.N."/>
            <person name="Triplett E.W."/>
        </authorList>
    </citation>
    <scope>NUCLEOTIDE SEQUENCE [LARGE SCALE GENOMIC DNA]</scope>
    <source>
        <strain>ATCC 49037 / DSM 5601 / CCUG 37298 / CIP 103539 / LMG 7603 / PAl5</strain>
    </source>
</reference>
<comment type="subunit">
    <text evidence="1">Forms oligomers.</text>
</comment>
<comment type="subcellular location">
    <subcellularLocation>
        <location evidence="1">Cytoplasm</location>
        <location evidence="1">Nucleoid</location>
    </subcellularLocation>
</comment>
<comment type="similarity">
    <text evidence="1">Belongs to the MraZ family.</text>
</comment>
<keyword id="KW-0963">Cytoplasm</keyword>
<keyword id="KW-0238">DNA-binding</keyword>
<keyword id="KW-1185">Reference proteome</keyword>
<keyword id="KW-0677">Repeat</keyword>
<keyword id="KW-0804">Transcription</keyword>
<keyword id="KW-0805">Transcription regulation</keyword>
<sequence length="158" mass="17241">MSVFLGTHQNRLDAKGRVSIPAGFRTALRAQAAAGEALVILRPSHQYPCIEAWPTAAFAALSQPLDRLDMFSDEHDDMAAALYADAYPVDADREGRIILPDTLKEHAALTDSVAFMGLGRTFQIWEPAAAERRRAEARTRSRQLALPAQGRRQGGADA</sequence>
<gene>
    <name evidence="1" type="primary">mraZ</name>
    <name type="ordered locus">GDI3182</name>
    <name type="ordered locus">Gdia_3179</name>
</gene>
<protein>
    <recommendedName>
        <fullName>Transcriptional regulator MraZ</fullName>
    </recommendedName>
</protein>